<gene>
    <name type="primary">has1</name>
    <name type="ORF">SPAC1F7.02c</name>
</gene>
<evidence type="ECO:0000250" key="1"/>
<evidence type="ECO:0000255" key="2">
    <source>
        <dbReference type="PROSITE-ProRule" id="PRU00541"/>
    </source>
</evidence>
<evidence type="ECO:0000255" key="3">
    <source>
        <dbReference type="PROSITE-ProRule" id="PRU00542"/>
    </source>
</evidence>
<evidence type="ECO:0000256" key="4">
    <source>
        <dbReference type="SAM" id="MobiDB-lite"/>
    </source>
</evidence>
<evidence type="ECO:0000269" key="5">
    <source>
    </source>
</evidence>
<evidence type="ECO:0000305" key="6"/>
<evidence type="ECO:0007829" key="7">
    <source>
        <dbReference type="PDB" id="8EUP"/>
    </source>
</evidence>
<evidence type="ECO:0007829" key="8">
    <source>
        <dbReference type="PDB" id="8EUY"/>
    </source>
</evidence>
<evidence type="ECO:0007829" key="9">
    <source>
        <dbReference type="PDB" id="8EV3"/>
    </source>
</evidence>
<comment type="function">
    <text>ATP-dependent RNA helicase involved in 40S ribosomal subunit biogenesis. Required for the processing and cleavage of 35S pre-rRNA at sites A0, A1, and A2, leading to mature 18S rRNA.</text>
</comment>
<comment type="catalytic activity">
    <reaction>
        <text>ATP + H2O = ADP + phosphate + H(+)</text>
        <dbReference type="Rhea" id="RHEA:13065"/>
        <dbReference type="ChEBI" id="CHEBI:15377"/>
        <dbReference type="ChEBI" id="CHEBI:15378"/>
        <dbReference type="ChEBI" id="CHEBI:30616"/>
        <dbReference type="ChEBI" id="CHEBI:43474"/>
        <dbReference type="ChEBI" id="CHEBI:456216"/>
        <dbReference type="EC" id="3.6.4.13"/>
    </reaction>
</comment>
<comment type="subunit">
    <text evidence="1">Associates in the nucleolus with the 60S and pre-60S ribosomal subunits.</text>
</comment>
<comment type="subcellular location">
    <subcellularLocation>
        <location evidence="1">Nucleus</location>
        <location evidence="1">Nucleolus</location>
    </subcellularLocation>
</comment>
<comment type="domain">
    <text>The Q motif is unique to and characteristic of the DEAD box family of RNA helicases and controls ATP binding and hydrolysis.</text>
</comment>
<comment type="similarity">
    <text evidence="6">Belongs to the DEAD box helicase family. DDX18/HAS1 subfamily.</text>
</comment>
<organism>
    <name type="scientific">Schizosaccharomyces pombe (strain 972 / ATCC 24843)</name>
    <name type="common">Fission yeast</name>
    <dbReference type="NCBI Taxonomy" id="284812"/>
    <lineage>
        <taxon>Eukaryota</taxon>
        <taxon>Fungi</taxon>
        <taxon>Dikarya</taxon>
        <taxon>Ascomycota</taxon>
        <taxon>Taphrinomycotina</taxon>
        <taxon>Schizosaccharomycetes</taxon>
        <taxon>Schizosaccharomycetales</taxon>
        <taxon>Schizosaccharomycetaceae</taxon>
        <taxon>Schizosaccharomyces</taxon>
    </lineage>
</organism>
<proteinExistence type="evidence at protein level"/>
<feature type="chain" id="PRO_0000055087" description="ATP-dependent RNA helicase has1">
    <location>
        <begin position="1"/>
        <end position="578"/>
    </location>
</feature>
<feature type="domain" description="Helicase ATP-binding" evidence="2">
    <location>
        <begin position="120"/>
        <end position="296"/>
    </location>
</feature>
<feature type="domain" description="Helicase C-terminal" evidence="3">
    <location>
        <begin position="310"/>
        <end position="480"/>
    </location>
</feature>
<feature type="region of interest" description="Disordered" evidence="4">
    <location>
        <begin position="1"/>
        <end position="81"/>
    </location>
</feature>
<feature type="region of interest" description="Disordered" evidence="4">
    <location>
        <begin position="543"/>
        <end position="578"/>
    </location>
</feature>
<feature type="short sequence motif" description="Q motif">
    <location>
        <begin position="89"/>
        <end position="117"/>
    </location>
</feature>
<feature type="short sequence motif" description="DEAD box">
    <location>
        <begin position="243"/>
        <end position="246"/>
    </location>
</feature>
<feature type="short sequence motif" description="Bipartite nuclear localization signal" evidence="1">
    <location>
        <begin position="322"/>
        <end position="338"/>
    </location>
</feature>
<feature type="compositionally biased region" description="Basic residues" evidence="4">
    <location>
        <begin position="1"/>
        <end position="12"/>
    </location>
</feature>
<feature type="compositionally biased region" description="Acidic residues" evidence="4">
    <location>
        <begin position="36"/>
        <end position="53"/>
    </location>
</feature>
<feature type="compositionally biased region" description="Acidic residues" evidence="4">
    <location>
        <begin position="60"/>
        <end position="71"/>
    </location>
</feature>
<feature type="compositionally biased region" description="Basic and acidic residues" evidence="4">
    <location>
        <begin position="543"/>
        <end position="561"/>
    </location>
</feature>
<feature type="binding site" evidence="2">
    <location>
        <begin position="133"/>
        <end position="140"/>
    </location>
    <ligand>
        <name>ATP</name>
        <dbReference type="ChEBI" id="CHEBI:30616"/>
    </ligand>
</feature>
<feature type="modified residue" description="Phosphoserine" evidence="5">
    <location>
        <position position="60"/>
    </location>
</feature>
<feature type="modified residue" description="Phosphoserine" evidence="5">
    <location>
        <position position="62"/>
    </location>
</feature>
<feature type="helix" evidence="8">
    <location>
        <begin position="99"/>
        <end position="107"/>
    </location>
</feature>
<feature type="helix" evidence="8">
    <location>
        <begin position="114"/>
        <end position="117"/>
    </location>
</feature>
<feature type="helix" evidence="8">
    <location>
        <begin position="120"/>
        <end position="124"/>
    </location>
</feature>
<feature type="strand" evidence="8">
    <location>
        <begin position="129"/>
        <end position="131"/>
    </location>
</feature>
<feature type="helix" evidence="8">
    <location>
        <begin position="140"/>
        <end position="154"/>
    </location>
</feature>
<feature type="helix" evidence="8">
    <location>
        <begin position="158"/>
        <end position="160"/>
    </location>
</feature>
<feature type="strand" evidence="8">
    <location>
        <begin position="164"/>
        <end position="167"/>
    </location>
</feature>
<feature type="helix" evidence="8">
    <location>
        <begin position="171"/>
        <end position="184"/>
    </location>
</feature>
<feature type="turn" evidence="8">
    <location>
        <begin position="185"/>
        <end position="187"/>
    </location>
</feature>
<feature type="strand" evidence="7">
    <location>
        <begin position="188"/>
        <end position="190"/>
    </location>
</feature>
<feature type="strand" evidence="8">
    <location>
        <begin position="192"/>
        <end position="194"/>
    </location>
</feature>
<feature type="helix" evidence="8">
    <location>
        <begin position="201"/>
        <end position="210"/>
    </location>
</feature>
<feature type="strand" evidence="8">
    <location>
        <begin position="213"/>
        <end position="217"/>
    </location>
</feature>
<feature type="helix" evidence="8">
    <location>
        <begin position="219"/>
        <end position="228"/>
    </location>
</feature>
<feature type="strand" evidence="8">
    <location>
        <begin position="239"/>
        <end position="242"/>
    </location>
</feature>
<feature type="helix" evidence="8">
    <location>
        <begin position="245"/>
        <end position="251"/>
    </location>
</feature>
<feature type="helix" evidence="8">
    <location>
        <begin position="254"/>
        <end position="263"/>
    </location>
</feature>
<feature type="strand" evidence="8">
    <location>
        <begin position="270"/>
        <end position="274"/>
    </location>
</feature>
<feature type="helix" evidence="8">
    <location>
        <begin position="280"/>
        <end position="288"/>
    </location>
</feature>
<feature type="strand" evidence="8">
    <location>
        <begin position="314"/>
        <end position="317"/>
    </location>
</feature>
<feature type="helix" evidence="8">
    <location>
        <begin position="320"/>
        <end position="322"/>
    </location>
</feature>
<feature type="helix" evidence="8">
    <location>
        <begin position="323"/>
        <end position="333"/>
    </location>
</feature>
<feature type="turn" evidence="8">
    <location>
        <begin position="334"/>
        <end position="336"/>
    </location>
</feature>
<feature type="strand" evidence="8">
    <location>
        <begin position="337"/>
        <end position="344"/>
    </location>
</feature>
<feature type="helix" evidence="8">
    <location>
        <begin position="346"/>
        <end position="357"/>
    </location>
</feature>
<feature type="turn" evidence="8">
    <location>
        <begin position="358"/>
        <end position="360"/>
    </location>
</feature>
<feature type="strand" evidence="8">
    <location>
        <begin position="364"/>
        <end position="366"/>
    </location>
</feature>
<feature type="turn" evidence="9">
    <location>
        <begin position="368"/>
        <end position="370"/>
    </location>
</feature>
<feature type="helix" evidence="8">
    <location>
        <begin position="372"/>
        <end position="384"/>
    </location>
</feature>
<feature type="strand" evidence="8">
    <location>
        <begin position="385"/>
        <end position="393"/>
    </location>
</feature>
<feature type="helix" evidence="8">
    <location>
        <begin position="394"/>
        <end position="397"/>
    </location>
</feature>
<feature type="strand" evidence="8">
    <location>
        <begin position="406"/>
        <end position="410"/>
    </location>
</feature>
<feature type="helix" evidence="8">
    <location>
        <begin position="417"/>
        <end position="424"/>
    </location>
</feature>
<feature type="strand" evidence="8">
    <location>
        <begin position="436"/>
        <end position="441"/>
    </location>
</feature>
<feature type="helix" evidence="8">
    <location>
        <begin position="443"/>
        <end position="446"/>
    </location>
</feature>
<feature type="helix" evidence="8">
    <location>
        <begin position="447"/>
        <end position="454"/>
    </location>
</feature>
<feature type="strand" evidence="8">
    <location>
        <begin position="460"/>
        <end position="462"/>
    </location>
</feature>
<feature type="turn" evidence="8">
    <location>
        <begin position="466"/>
        <end position="468"/>
    </location>
</feature>
<feature type="helix" evidence="8">
    <location>
        <begin position="473"/>
        <end position="482"/>
    </location>
</feature>
<feature type="helix" evidence="8">
    <location>
        <begin position="484"/>
        <end position="502"/>
    </location>
</feature>
<feature type="turn" evidence="8">
    <location>
        <begin position="507"/>
        <end position="509"/>
    </location>
</feature>
<feature type="turn" evidence="8">
    <location>
        <begin position="512"/>
        <end position="514"/>
    </location>
</feature>
<feature type="helix" evidence="8">
    <location>
        <begin position="517"/>
        <end position="524"/>
    </location>
</feature>
<accession>Q09916</accession>
<name>HAS1_SCHPO</name>
<keyword id="KW-0002">3D-structure</keyword>
<keyword id="KW-0067">ATP-binding</keyword>
<keyword id="KW-0347">Helicase</keyword>
<keyword id="KW-0378">Hydrolase</keyword>
<keyword id="KW-0547">Nucleotide-binding</keyword>
<keyword id="KW-0539">Nucleus</keyword>
<keyword id="KW-0597">Phosphoprotein</keyword>
<keyword id="KW-1185">Reference proteome</keyword>
<keyword id="KW-0690">Ribosome biogenesis</keyword>
<keyword id="KW-0694">RNA-binding</keyword>
<keyword id="KW-0698">rRNA processing</keyword>
<protein>
    <recommendedName>
        <fullName>ATP-dependent RNA helicase has1</fullName>
        <ecNumber>3.6.4.13</ecNumber>
    </recommendedName>
</protein>
<dbReference type="EC" id="3.6.4.13"/>
<dbReference type="EMBL" id="CU329670">
    <property type="protein sequence ID" value="CAA91949.1"/>
    <property type="molecule type" value="Genomic_DNA"/>
</dbReference>
<dbReference type="PIR" id="S62574">
    <property type="entry name" value="S62574"/>
</dbReference>
<dbReference type="RefSeq" id="NP_594488.1">
    <property type="nucleotide sequence ID" value="NM_001019917.2"/>
</dbReference>
<dbReference type="PDB" id="8ESQ">
    <property type="method" value="EM"/>
    <property type="resolution" value="2.80 A"/>
    <property type="chains" value="D=1-578"/>
</dbReference>
<dbReference type="PDB" id="8ESR">
    <property type="method" value="EM"/>
    <property type="resolution" value="3.20 A"/>
    <property type="chains" value="D=1-578"/>
</dbReference>
<dbReference type="PDB" id="8ETG">
    <property type="method" value="EM"/>
    <property type="resolution" value="3.40 A"/>
    <property type="chains" value="D=1-578"/>
</dbReference>
<dbReference type="PDB" id="8ETH">
    <property type="method" value="EM"/>
    <property type="resolution" value="3.80 A"/>
    <property type="chains" value="D=1-578"/>
</dbReference>
<dbReference type="PDB" id="8ETI">
    <property type="method" value="EM"/>
    <property type="resolution" value="3.70 A"/>
    <property type="chains" value="D=1-578"/>
</dbReference>
<dbReference type="PDB" id="8EUP">
    <property type="method" value="EM"/>
    <property type="resolution" value="3.10 A"/>
    <property type="chains" value="D=1-578"/>
</dbReference>
<dbReference type="PDB" id="8EUY">
    <property type="method" value="EM"/>
    <property type="resolution" value="3.00 A"/>
    <property type="chains" value="D=1-578"/>
</dbReference>
<dbReference type="PDB" id="8EV3">
    <property type="method" value="EM"/>
    <property type="resolution" value="3.00 A"/>
    <property type="chains" value="D=1-578"/>
</dbReference>
<dbReference type="PDBsum" id="8ESQ"/>
<dbReference type="PDBsum" id="8ESR"/>
<dbReference type="PDBsum" id="8ETG"/>
<dbReference type="PDBsum" id="8ETH"/>
<dbReference type="PDBsum" id="8ETI"/>
<dbReference type="PDBsum" id="8EUP"/>
<dbReference type="PDBsum" id="8EUY"/>
<dbReference type="PDBsum" id="8EV3"/>
<dbReference type="SMR" id="Q09916"/>
<dbReference type="BioGRID" id="278164">
    <property type="interactions" value="13"/>
</dbReference>
<dbReference type="FunCoup" id="Q09916">
    <property type="interactions" value="739"/>
</dbReference>
<dbReference type="STRING" id="284812.Q09916"/>
<dbReference type="iPTMnet" id="Q09916"/>
<dbReference type="PaxDb" id="4896-SPAC1F7.02c.1"/>
<dbReference type="EnsemblFungi" id="SPAC1F7.02c.1">
    <property type="protein sequence ID" value="SPAC1F7.02c.1:pep"/>
    <property type="gene ID" value="SPAC1F7.02c"/>
</dbReference>
<dbReference type="GeneID" id="2541668"/>
<dbReference type="KEGG" id="spo:2541668"/>
<dbReference type="PomBase" id="SPAC1F7.02c">
    <property type="gene designation" value="has1"/>
</dbReference>
<dbReference type="VEuPathDB" id="FungiDB:SPAC1F7.02c"/>
<dbReference type="eggNOG" id="KOG0342">
    <property type="taxonomic scope" value="Eukaryota"/>
</dbReference>
<dbReference type="HOGENOM" id="CLU_003041_26_5_1"/>
<dbReference type="InParanoid" id="Q09916"/>
<dbReference type="OMA" id="LMEFHSQ"/>
<dbReference type="PhylomeDB" id="Q09916"/>
<dbReference type="PRO" id="PR:Q09916"/>
<dbReference type="Proteomes" id="UP000002485">
    <property type="component" value="Chromosome I"/>
</dbReference>
<dbReference type="GO" id="GO:0005730">
    <property type="term" value="C:nucleolus"/>
    <property type="evidence" value="ECO:0007005"/>
    <property type="project" value="PomBase"/>
</dbReference>
<dbReference type="GO" id="GO:0005634">
    <property type="term" value="C:nucleus"/>
    <property type="evidence" value="ECO:0007005"/>
    <property type="project" value="PomBase"/>
</dbReference>
<dbReference type="GO" id="GO:0030684">
    <property type="term" value="C:preribosome"/>
    <property type="evidence" value="ECO:0000314"/>
    <property type="project" value="PomBase"/>
</dbReference>
<dbReference type="GO" id="GO:0005524">
    <property type="term" value="F:ATP binding"/>
    <property type="evidence" value="ECO:0007669"/>
    <property type="project" value="UniProtKB-KW"/>
</dbReference>
<dbReference type="GO" id="GO:0016887">
    <property type="term" value="F:ATP hydrolysis activity"/>
    <property type="evidence" value="ECO:0007669"/>
    <property type="project" value="RHEA"/>
</dbReference>
<dbReference type="GO" id="GO:0003723">
    <property type="term" value="F:RNA binding"/>
    <property type="evidence" value="ECO:0000266"/>
    <property type="project" value="PomBase"/>
</dbReference>
<dbReference type="GO" id="GO:0003724">
    <property type="term" value="F:RNA helicase activity"/>
    <property type="evidence" value="ECO:0000266"/>
    <property type="project" value="PomBase"/>
</dbReference>
<dbReference type="GO" id="GO:1902626">
    <property type="term" value="P:assembly of large subunit precursor of preribosome"/>
    <property type="evidence" value="ECO:0000269"/>
    <property type="project" value="PomBase"/>
</dbReference>
<dbReference type="GO" id="GO:0000463">
    <property type="term" value="P:maturation of LSU-rRNA from tricistronic rRNA transcript (SSU-rRNA, 5.8S rRNA, LSU-rRNA)"/>
    <property type="evidence" value="ECO:0000318"/>
    <property type="project" value="GO_Central"/>
</dbReference>
<dbReference type="CDD" id="cd17942">
    <property type="entry name" value="DEADc_DDX18"/>
    <property type="match status" value="1"/>
</dbReference>
<dbReference type="CDD" id="cd18787">
    <property type="entry name" value="SF2_C_DEAD"/>
    <property type="match status" value="1"/>
</dbReference>
<dbReference type="FunFam" id="3.40.50.300:FF:000379">
    <property type="entry name" value="RNA helicase"/>
    <property type="match status" value="1"/>
</dbReference>
<dbReference type="FunFam" id="3.40.50.300:FF:000460">
    <property type="entry name" value="RNA helicase"/>
    <property type="match status" value="1"/>
</dbReference>
<dbReference type="Gene3D" id="3.40.50.300">
    <property type="entry name" value="P-loop containing nucleotide triphosphate hydrolases"/>
    <property type="match status" value="2"/>
</dbReference>
<dbReference type="InterPro" id="IPR044773">
    <property type="entry name" value="DDX18/Has1_DEADc"/>
</dbReference>
<dbReference type="InterPro" id="IPR011545">
    <property type="entry name" value="DEAD/DEAH_box_helicase_dom"/>
</dbReference>
<dbReference type="InterPro" id="IPR014001">
    <property type="entry name" value="Helicase_ATP-bd"/>
</dbReference>
<dbReference type="InterPro" id="IPR001650">
    <property type="entry name" value="Helicase_C-like"/>
</dbReference>
<dbReference type="InterPro" id="IPR027417">
    <property type="entry name" value="P-loop_NTPase"/>
</dbReference>
<dbReference type="InterPro" id="IPR000629">
    <property type="entry name" value="RNA-helicase_DEAD-box_CS"/>
</dbReference>
<dbReference type="InterPro" id="IPR014014">
    <property type="entry name" value="RNA_helicase_DEAD_Q_motif"/>
</dbReference>
<dbReference type="InterPro" id="IPR025313">
    <property type="entry name" value="SPB4-like_CTE"/>
</dbReference>
<dbReference type="PANTHER" id="PTHR24031">
    <property type="entry name" value="RNA HELICASE"/>
    <property type="match status" value="1"/>
</dbReference>
<dbReference type="Pfam" id="PF13959">
    <property type="entry name" value="CTE_SPB4"/>
    <property type="match status" value="1"/>
</dbReference>
<dbReference type="Pfam" id="PF00270">
    <property type="entry name" value="DEAD"/>
    <property type="match status" value="1"/>
</dbReference>
<dbReference type="Pfam" id="PF00271">
    <property type="entry name" value="Helicase_C"/>
    <property type="match status" value="1"/>
</dbReference>
<dbReference type="SMART" id="SM00487">
    <property type="entry name" value="DEXDc"/>
    <property type="match status" value="1"/>
</dbReference>
<dbReference type="SMART" id="SM01178">
    <property type="entry name" value="DUF4217"/>
    <property type="match status" value="1"/>
</dbReference>
<dbReference type="SMART" id="SM00490">
    <property type="entry name" value="HELICc"/>
    <property type="match status" value="1"/>
</dbReference>
<dbReference type="SUPFAM" id="SSF52540">
    <property type="entry name" value="P-loop containing nucleoside triphosphate hydrolases"/>
    <property type="match status" value="2"/>
</dbReference>
<dbReference type="PROSITE" id="PS00039">
    <property type="entry name" value="DEAD_ATP_HELICASE"/>
    <property type="match status" value="1"/>
</dbReference>
<dbReference type="PROSITE" id="PS51192">
    <property type="entry name" value="HELICASE_ATP_BIND_1"/>
    <property type="match status" value="1"/>
</dbReference>
<dbReference type="PROSITE" id="PS51194">
    <property type="entry name" value="HELICASE_CTER"/>
    <property type="match status" value="1"/>
</dbReference>
<dbReference type="PROSITE" id="PS51195">
    <property type="entry name" value="Q_MOTIF"/>
    <property type="match status" value="1"/>
</dbReference>
<sequence>MAKSELKRKKHQSGNEEVKEKRQKPLKNDKKIAEELPQDEDDYEQEEENEDADQNTSVESESEELDNENEDERVQKSVNLNASSTSDIEKFSDLQLSENIQKAIKEMGFETMTEIQKRSIPPLLAGRDVLGAAKTGSGKTLAFLIPTIEMLYALKFKPRNGTGVIIISPTRELALQIFGVAKELLKYHHQTFGIVIGGANRRAEADKLVKGVNLLVATPGRLLDHLQNTKGFVFRNLRSLVIDEADRILEIGFEDEMRQIMKILPSENRQTLLFSATQTTKVEDLARISLKPGPLYVNVDSGKPTSTVEGLEQGYVVVDSDKRFLLLFSFLKRNLKKKVIVFMSSCASVKYMAELLNYIDLPVLDLHGKQKQQRRTNTFFEFCNAEKGILLCTNVAARGLDIPAVDWIVQYDPPDDPRDYIHRVGRTARGTKGTGKSLMFLAPSELGFLRYLKTAKVSLNEFEFPANKVANVQSQLEKLVSKNYYLQQSAKDGYRSYLQAYASYSLKSIFDINKLDLAKVAKSFGFAHPPNVNITIGASGRTDKKERRAGYNKKNHVDVYSKQRSSAISQDKERGWSR</sequence>
<reference key="1">
    <citation type="journal article" date="2002" name="Nature">
        <title>The genome sequence of Schizosaccharomyces pombe.</title>
        <authorList>
            <person name="Wood V."/>
            <person name="Gwilliam R."/>
            <person name="Rajandream M.A."/>
            <person name="Lyne M.H."/>
            <person name="Lyne R."/>
            <person name="Stewart A."/>
            <person name="Sgouros J.G."/>
            <person name="Peat N."/>
            <person name="Hayles J."/>
            <person name="Baker S.G."/>
            <person name="Basham D."/>
            <person name="Bowman S."/>
            <person name="Brooks K."/>
            <person name="Brown D."/>
            <person name="Brown S."/>
            <person name="Chillingworth T."/>
            <person name="Churcher C.M."/>
            <person name="Collins M."/>
            <person name="Connor R."/>
            <person name="Cronin A."/>
            <person name="Davis P."/>
            <person name="Feltwell T."/>
            <person name="Fraser A."/>
            <person name="Gentles S."/>
            <person name="Goble A."/>
            <person name="Hamlin N."/>
            <person name="Harris D.E."/>
            <person name="Hidalgo J."/>
            <person name="Hodgson G."/>
            <person name="Holroyd S."/>
            <person name="Hornsby T."/>
            <person name="Howarth S."/>
            <person name="Huckle E.J."/>
            <person name="Hunt S."/>
            <person name="Jagels K."/>
            <person name="James K.D."/>
            <person name="Jones L."/>
            <person name="Jones M."/>
            <person name="Leather S."/>
            <person name="McDonald S."/>
            <person name="McLean J."/>
            <person name="Mooney P."/>
            <person name="Moule S."/>
            <person name="Mungall K.L."/>
            <person name="Murphy L.D."/>
            <person name="Niblett D."/>
            <person name="Odell C."/>
            <person name="Oliver K."/>
            <person name="O'Neil S."/>
            <person name="Pearson D."/>
            <person name="Quail M.A."/>
            <person name="Rabbinowitsch E."/>
            <person name="Rutherford K.M."/>
            <person name="Rutter S."/>
            <person name="Saunders D."/>
            <person name="Seeger K."/>
            <person name="Sharp S."/>
            <person name="Skelton J."/>
            <person name="Simmonds M.N."/>
            <person name="Squares R."/>
            <person name="Squares S."/>
            <person name="Stevens K."/>
            <person name="Taylor K."/>
            <person name="Taylor R.G."/>
            <person name="Tivey A."/>
            <person name="Walsh S.V."/>
            <person name="Warren T."/>
            <person name="Whitehead S."/>
            <person name="Woodward J.R."/>
            <person name="Volckaert G."/>
            <person name="Aert R."/>
            <person name="Robben J."/>
            <person name="Grymonprez B."/>
            <person name="Weltjens I."/>
            <person name="Vanstreels E."/>
            <person name="Rieger M."/>
            <person name="Schaefer M."/>
            <person name="Mueller-Auer S."/>
            <person name="Gabel C."/>
            <person name="Fuchs M."/>
            <person name="Duesterhoeft A."/>
            <person name="Fritzc C."/>
            <person name="Holzer E."/>
            <person name="Moestl D."/>
            <person name="Hilbert H."/>
            <person name="Borzym K."/>
            <person name="Langer I."/>
            <person name="Beck A."/>
            <person name="Lehrach H."/>
            <person name="Reinhardt R."/>
            <person name="Pohl T.M."/>
            <person name="Eger P."/>
            <person name="Zimmermann W."/>
            <person name="Wedler H."/>
            <person name="Wambutt R."/>
            <person name="Purnelle B."/>
            <person name="Goffeau A."/>
            <person name="Cadieu E."/>
            <person name="Dreano S."/>
            <person name="Gloux S."/>
            <person name="Lelaure V."/>
            <person name="Mottier S."/>
            <person name="Galibert F."/>
            <person name="Aves S.J."/>
            <person name="Xiang Z."/>
            <person name="Hunt C."/>
            <person name="Moore K."/>
            <person name="Hurst S.M."/>
            <person name="Lucas M."/>
            <person name="Rochet M."/>
            <person name="Gaillardin C."/>
            <person name="Tallada V.A."/>
            <person name="Garzon A."/>
            <person name="Thode G."/>
            <person name="Daga R.R."/>
            <person name="Cruzado L."/>
            <person name="Jimenez J."/>
            <person name="Sanchez M."/>
            <person name="del Rey F."/>
            <person name="Benito J."/>
            <person name="Dominguez A."/>
            <person name="Revuelta J.L."/>
            <person name="Moreno S."/>
            <person name="Armstrong J."/>
            <person name="Forsburg S.L."/>
            <person name="Cerutti L."/>
            <person name="Lowe T."/>
            <person name="McCombie W.R."/>
            <person name="Paulsen I."/>
            <person name="Potashkin J."/>
            <person name="Shpakovski G.V."/>
            <person name="Ussery D."/>
            <person name="Barrell B.G."/>
            <person name="Nurse P."/>
        </authorList>
    </citation>
    <scope>NUCLEOTIDE SEQUENCE [LARGE SCALE GENOMIC DNA]</scope>
    <source>
        <strain>972 / ATCC 24843</strain>
    </source>
</reference>
<reference key="2">
    <citation type="journal article" date="2008" name="J. Proteome Res.">
        <title>Phosphoproteome analysis of fission yeast.</title>
        <authorList>
            <person name="Wilson-Grady J.T."/>
            <person name="Villen J."/>
            <person name="Gygi S.P."/>
        </authorList>
    </citation>
    <scope>PHOSPHORYLATION [LARGE SCALE ANALYSIS] AT SER-60 AND SER-62</scope>
    <scope>IDENTIFICATION BY MASS SPECTROMETRY</scope>
</reference>